<accession>B1LWR6</accession>
<evidence type="ECO:0000255" key="1">
    <source>
        <dbReference type="HAMAP-Rule" id="MF_01367"/>
    </source>
</evidence>
<evidence type="ECO:0000305" key="2"/>
<keyword id="KW-0687">Ribonucleoprotein</keyword>
<keyword id="KW-0689">Ribosomal protein</keyword>
<keyword id="KW-0694">RNA-binding</keyword>
<keyword id="KW-0699">rRNA-binding</keyword>
<dbReference type="EMBL" id="CP001001">
    <property type="protein sequence ID" value="ACB24203.1"/>
    <property type="molecule type" value="Genomic_DNA"/>
</dbReference>
<dbReference type="RefSeq" id="WP_010686182.1">
    <property type="nucleotide sequence ID" value="NC_010505.1"/>
</dbReference>
<dbReference type="SMR" id="B1LWR6"/>
<dbReference type="STRING" id="426355.Mrad2831_2208"/>
<dbReference type="GeneID" id="96604894"/>
<dbReference type="KEGG" id="mrd:Mrad2831_2208"/>
<dbReference type="eggNOG" id="COG0093">
    <property type="taxonomic scope" value="Bacteria"/>
</dbReference>
<dbReference type="HOGENOM" id="CLU_095071_2_1_5"/>
<dbReference type="OrthoDB" id="9806379at2"/>
<dbReference type="Proteomes" id="UP000006589">
    <property type="component" value="Chromosome"/>
</dbReference>
<dbReference type="GO" id="GO:0022625">
    <property type="term" value="C:cytosolic large ribosomal subunit"/>
    <property type="evidence" value="ECO:0007669"/>
    <property type="project" value="TreeGrafter"/>
</dbReference>
<dbReference type="GO" id="GO:0070180">
    <property type="term" value="F:large ribosomal subunit rRNA binding"/>
    <property type="evidence" value="ECO:0007669"/>
    <property type="project" value="TreeGrafter"/>
</dbReference>
<dbReference type="GO" id="GO:0003735">
    <property type="term" value="F:structural constituent of ribosome"/>
    <property type="evidence" value="ECO:0007669"/>
    <property type="project" value="InterPro"/>
</dbReference>
<dbReference type="GO" id="GO:0006412">
    <property type="term" value="P:translation"/>
    <property type="evidence" value="ECO:0007669"/>
    <property type="project" value="UniProtKB-UniRule"/>
</dbReference>
<dbReference type="CDD" id="cd00337">
    <property type="entry name" value="Ribosomal_uL14"/>
    <property type="match status" value="1"/>
</dbReference>
<dbReference type="FunFam" id="2.40.150.20:FF:000001">
    <property type="entry name" value="50S ribosomal protein L14"/>
    <property type="match status" value="1"/>
</dbReference>
<dbReference type="Gene3D" id="2.40.150.20">
    <property type="entry name" value="Ribosomal protein L14"/>
    <property type="match status" value="1"/>
</dbReference>
<dbReference type="HAMAP" id="MF_01367">
    <property type="entry name" value="Ribosomal_uL14"/>
    <property type="match status" value="1"/>
</dbReference>
<dbReference type="InterPro" id="IPR000218">
    <property type="entry name" value="Ribosomal_uL14"/>
</dbReference>
<dbReference type="InterPro" id="IPR005745">
    <property type="entry name" value="Ribosomal_uL14_bac-type"/>
</dbReference>
<dbReference type="InterPro" id="IPR019972">
    <property type="entry name" value="Ribosomal_uL14_CS"/>
</dbReference>
<dbReference type="InterPro" id="IPR036853">
    <property type="entry name" value="Ribosomal_uL14_sf"/>
</dbReference>
<dbReference type="NCBIfam" id="TIGR01067">
    <property type="entry name" value="rplN_bact"/>
    <property type="match status" value="1"/>
</dbReference>
<dbReference type="PANTHER" id="PTHR11761">
    <property type="entry name" value="50S/60S RIBOSOMAL PROTEIN L14/L23"/>
    <property type="match status" value="1"/>
</dbReference>
<dbReference type="PANTHER" id="PTHR11761:SF3">
    <property type="entry name" value="LARGE RIBOSOMAL SUBUNIT PROTEIN UL14M"/>
    <property type="match status" value="1"/>
</dbReference>
<dbReference type="Pfam" id="PF00238">
    <property type="entry name" value="Ribosomal_L14"/>
    <property type="match status" value="1"/>
</dbReference>
<dbReference type="SMART" id="SM01374">
    <property type="entry name" value="Ribosomal_L14"/>
    <property type="match status" value="1"/>
</dbReference>
<dbReference type="SUPFAM" id="SSF50193">
    <property type="entry name" value="Ribosomal protein L14"/>
    <property type="match status" value="1"/>
</dbReference>
<dbReference type="PROSITE" id="PS00049">
    <property type="entry name" value="RIBOSOMAL_L14"/>
    <property type="match status" value="1"/>
</dbReference>
<proteinExistence type="inferred from homology"/>
<organism>
    <name type="scientific">Methylobacterium radiotolerans (strain ATCC 27329 / DSM 1819 / JCM 2831 / NBRC 15690 / NCIMB 10815 / 0-1)</name>
    <dbReference type="NCBI Taxonomy" id="426355"/>
    <lineage>
        <taxon>Bacteria</taxon>
        <taxon>Pseudomonadati</taxon>
        <taxon>Pseudomonadota</taxon>
        <taxon>Alphaproteobacteria</taxon>
        <taxon>Hyphomicrobiales</taxon>
        <taxon>Methylobacteriaceae</taxon>
        <taxon>Methylobacterium</taxon>
    </lineage>
</organism>
<name>RL14_METRJ</name>
<reference key="1">
    <citation type="submission" date="2008-03" db="EMBL/GenBank/DDBJ databases">
        <title>Complete sequence of chromosome of Methylobacterium radiotolerans JCM 2831.</title>
        <authorList>
            <consortium name="US DOE Joint Genome Institute"/>
            <person name="Copeland A."/>
            <person name="Lucas S."/>
            <person name="Lapidus A."/>
            <person name="Glavina del Rio T."/>
            <person name="Dalin E."/>
            <person name="Tice H."/>
            <person name="Bruce D."/>
            <person name="Goodwin L."/>
            <person name="Pitluck S."/>
            <person name="Kiss H."/>
            <person name="Brettin T."/>
            <person name="Detter J.C."/>
            <person name="Han C."/>
            <person name="Kuske C.R."/>
            <person name="Schmutz J."/>
            <person name="Larimer F."/>
            <person name="Land M."/>
            <person name="Hauser L."/>
            <person name="Kyrpides N."/>
            <person name="Mikhailova N."/>
            <person name="Marx C.J."/>
            <person name="Richardson P."/>
        </authorList>
    </citation>
    <scope>NUCLEOTIDE SEQUENCE [LARGE SCALE GENOMIC DNA]</scope>
    <source>
        <strain>ATCC 27329 / DSM 1819 / JCM 2831 / NBRC 15690 / NCIMB 10815 / 0-1</strain>
    </source>
</reference>
<feature type="chain" id="PRO_1000144297" description="Large ribosomal subunit protein uL14">
    <location>
        <begin position="1"/>
        <end position="122"/>
    </location>
</feature>
<protein>
    <recommendedName>
        <fullName evidence="1">Large ribosomal subunit protein uL14</fullName>
    </recommendedName>
    <alternativeName>
        <fullName evidence="2">50S ribosomal protein L14</fullName>
    </alternativeName>
</protein>
<sequence length="122" mass="13347">MIQMQTNLDVADNSGARRVMCIKVLGGSKRKYAGVGDVIVVSVKEAIPRGRVKKGDVMKAVVVRTAKDVKRADGSVIRFDKNAAVLINNQKEPIGTRIFGPVPRELRARNHMKIISLAPEVL</sequence>
<gene>
    <name evidence="1" type="primary">rplN</name>
    <name type="ordered locus">Mrad2831_2208</name>
</gene>
<comment type="function">
    <text evidence="1">Binds to 23S rRNA. Forms part of two intersubunit bridges in the 70S ribosome.</text>
</comment>
<comment type="subunit">
    <text evidence="1">Part of the 50S ribosomal subunit. Forms a cluster with proteins L3 and L19. In the 70S ribosome, L14 and L19 interact and together make contacts with the 16S rRNA in bridges B5 and B8.</text>
</comment>
<comment type="similarity">
    <text evidence="1">Belongs to the universal ribosomal protein uL14 family.</text>
</comment>